<dbReference type="EC" id="3.6.1.27" evidence="1"/>
<dbReference type="EMBL" id="BX548174">
    <property type="protein sequence ID" value="CAE19415.1"/>
    <property type="molecule type" value="Genomic_DNA"/>
</dbReference>
<dbReference type="RefSeq" id="WP_011132589.1">
    <property type="nucleotide sequence ID" value="NC_005072.1"/>
</dbReference>
<dbReference type="SMR" id="Q7V1C3"/>
<dbReference type="STRING" id="59919.PMM0956"/>
<dbReference type="KEGG" id="pmm:PMM0956"/>
<dbReference type="eggNOG" id="COG1968">
    <property type="taxonomic scope" value="Bacteria"/>
</dbReference>
<dbReference type="HOGENOM" id="CLU_060296_1_0_3"/>
<dbReference type="OrthoDB" id="9808289at2"/>
<dbReference type="Proteomes" id="UP000001026">
    <property type="component" value="Chromosome"/>
</dbReference>
<dbReference type="GO" id="GO:0005886">
    <property type="term" value="C:plasma membrane"/>
    <property type="evidence" value="ECO:0007669"/>
    <property type="project" value="UniProtKB-SubCell"/>
</dbReference>
<dbReference type="GO" id="GO:0050380">
    <property type="term" value="F:undecaprenyl-diphosphatase activity"/>
    <property type="evidence" value="ECO:0007669"/>
    <property type="project" value="UniProtKB-UniRule"/>
</dbReference>
<dbReference type="GO" id="GO:0071555">
    <property type="term" value="P:cell wall organization"/>
    <property type="evidence" value="ECO:0007669"/>
    <property type="project" value="UniProtKB-KW"/>
</dbReference>
<dbReference type="GO" id="GO:0009252">
    <property type="term" value="P:peptidoglycan biosynthetic process"/>
    <property type="evidence" value="ECO:0007669"/>
    <property type="project" value="UniProtKB-KW"/>
</dbReference>
<dbReference type="GO" id="GO:0008360">
    <property type="term" value="P:regulation of cell shape"/>
    <property type="evidence" value="ECO:0007669"/>
    <property type="project" value="UniProtKB-KW"/>
</dbReference>
<dbReference type="GO" id="GO:0046677">
    <property type="term" value="P:response to antibiotic"/>
    <property type="evidence" value="ECO:0007669"/>
    <property type="project" value="UniProtKB-UniRule"/>
</dbReference>
<dbReference type="HAMAP" id="MF_01006">
    <property type="entry name" value="Undec_diphosphatase"/>
    <property type="match status" value="1"/>
</dbReference>
<dbReference type="InterPro" id="IPR003824">
    <property type="entry name" value="UppP"/>
</dbReference>
<dbReference type="PANTHER" id="PTHR30622">
    <property type="entry name" value="UNDECAPRENYL-DIPHOSPHATASE"/>
    <property type="match status" value="1"/>
</dbReference>
<dbReference type="PANTHER" id="PTHR30622:SF4">
    <property type="entry name" value="UNDECAPRENYL-DIPHOSPHATASE"/>
    <property type="match status" value="1"/>
</dbReference>
<dbReference type="Pfam" id="PF02673">
    <property type="entry name" value="BacA"/>
    <property type="match status" value="1"/>
</dbReference>
<sequence>MEFFKYIFYGIIQGLTEFIPISSTAHLKIISLLFGMDDPGSSVSAIIQIGSVFAIFWYFRKSISNYKNTNSRKPSYSFLFNKLNKSIFIGTIPIVFIGVIIKLFVPGFSDSFLRSNLSIALVSILMSLIMLFADISTKKSINLNNHKYPNNLYIGIAQAFAIVPGVSRSGATISMALLSGWNRKDAAKFSFLLGIPSISLAAFVEFFSAVNQFSTFPFLPLFAGLITAFFSSLLAINFLIKYVSSHGLKIFVYYRLIFGILILFNL</sequence>
<organism>
    <name type="scientific">Prochlorococcus marinus subsp. pastoris (strain CCMP1986 / NIES-2087 / MED4)</name>
    <dbReference type="NCBI Taxonomy" id="59919"/>
    <lineage>
        <taxon>Bacteria</taxon>
        <taxon>Bacillati</taxon>
        <taxon>Cyanobacteriota</taxon>
        <taxon>Cyanophyceae</taxon>
        <taxon>Synechococcales</taxon>
        <taxon>Prochlorococcaceae</taxon>
        <taxon>Prochlorococcus</taxon>
    </lineage>
</organism>
<reference key="1">
    <citation type="journal article" date="2003" name="Nature">
        <title>Genome divergence in two Prochlorococcus ecotypes reflects oceanic niche differentiation.</title>
        <authorList>
            <person name="Rocap G."/>
            <person name="Larimer F.W."/>
            <person name="Lamerdin J.E."/>
            <person name="Malfatti S."/>
            <person name="Chain P."/>
            <person name="Ahlgren N.A."/>
            <person name="Arellano A."/>
            <person name="Coleman M."/>
            <person name="Hauser L."/>
            <person name="Hess W.R."/>
            <person name="Johnson Z.I."/>
            <person name="Land M.L."/>
            <person name="Lindell D."/>
            <person name="Post A.F."/>
            <person name="Regala W."/>
            <person name="Shah M."/>
            <person name="Shaw S.L."/>
            <person name="Steglich C."/>
            <person name="Sullivan M.B."/>
            <person name="Ting C.S."/>
            <person name="Tolonen A."/>
            <person name="Webb E.A."/>
            <person name="Zinser E.R."/>
            <person name="Chisholm S.W."/>
        </authorList>
    </citation>
    <scope>NUCLEOTIDE SEQUENCE [LARGE SCALE GENOMIC DNA]</scope>
    <source>
        <strain>CCMP1986 / NIES-2087 / MED4</strain>
    </source>
</reference>
<proteinExistence type="inferred from homology"/>
<gene>
    <name evidence="1" type="primary">uppP</name>
    <name type="synonym">bacA</name>
    <name type="synonym">upk</name>
    <name type="ordered locus">PMM0956</name>
</gene>
<name>UPPP_PROMP</name>
<comment type="function">
    <text evidence="1">Catalyzes the dephosphorylation of undecaprenyl diphosphate (UPP). Confers resistance to bacitracin.</text>
</comment>
<comment type="catalytic activity">
    <reaction evidence="1">
        <text>di-trans,octa-cis-undecaprenyl diphosphate + H2O = di-trans,octa-cis-undecaprenyl phosphate + phosphate + H(+)</text>
        <dbReference type="Rhea" id="RHEA:28094"/>
        <dbReference type="ChEBI" id="CHEBI:15377"/>
        <dbReference type="ChEBI" id="CHEBI:15378"/>
        <dbReference type="ChEBI" id="CHEBI:43474"/>
        <dbReference type="ChEBI" id="CHEBI:58405"/>
        <dbReference type="ChEBI" id="CHEBI:60392"/>
        <dbReference type="EC" id="3.6.1.27"/>
    </reaction>
</comment>
<comment type="subcellular location">
    <subcellularLocation>
        <location evidence="1">Cell inner membrane</location>
        <topology evidence="1">Multi-pass membrane protein</topology>
    </subcellularLocation>
</comment>
<comment type="miscellaneous">
    <text>Bacitracin is thought to be involved in the inhibition of peptidoglycan synthesis by sequestering undecaprenyl diphosphate, thereby reducing the pool of lipid carrier available.</text>
</comment>
<comment type="similarity">
    <text evidence="1">Belongs to the UppP family.</text>
</comment>
<evidence type="ECO:0000255" key="1">
    <source>
        <dbReference type="HAMAP-Rule" id="MF_01006"/>
    </source>
</evidence>
<accession>Q7V1C3</accession>
<keyword id="KW-0046">Antibiotic resistance</keyword>
<keyword id="KW-0997">Cell inner membrane</keyword>
<keyword id="KW-1003">Cell membrane</keyword>
<keyword id="KW-0133">Cell shape</keyword>
<keyword id="KW-0961">Cell wall biogenesis/degradation</keyword>
<keyword id="KW-0378">Hydrolase</keyword>
<keyword id="KW-0472">Membrane</keyword>
<keyword id="KW-0573">Peptidoglycan synthesis</keyword>
<keyword id="KW-0812">Transmembrane</keyword>
<keyword id="KW-1133">Transmembrane helix</keyword>
<feature type="chain" id="PRO_0000151180" description="Undecaprenyl-diphosphatase">
    <location>
        <begin position="1"/>
        <end position="266"/>
    </location>
</feature>
<feature type="transmembrane region" description="Helical" evidence="1">
    <location>
        <begin position="1"/>
        <end position="21"/>
    </location>
</feature>
<feature type="transmembrane region" description="Helical" evidence="1">
    <location>
        <begin position="39"/>
        <end position="59"/>
    </location>
</feature>
<feature type="transmembrane region" description="Helical" evidence="1">
    <location>
        <begin position="87"/>
        <end position="107"/>
    </location>
</feature>
<feature type="transmembrane region" description="Helical" evidence="1">
    <location>
        <begin position="117"/>
        <end position="137"/>
    </location>
</feature>
<feature type="transmembrane region" description="Helical" evidence="1">
    <location>
        <begin position="153"/>
        <end position="173"/>
    </location>
</feature>
<feature type="transmembrane region" description="Helical" evidence="1">
    <location>
        <begin position="189"/>
        <end position="209"/>
    </location>
</feature>
<feature type="transmembrane region" description="Helical" evidence="1">
    <location>
        <begin position="216"/>
        <end position="236"/>
    </location>
</feature>
<feature type="transmembrane region" description="Helical" evidence="1">
    <location>
        <begin position="246"/>
        <end position="266"/>
    </location>
</feature>
<protein>
    <recommendedName>
        <fullName evidence="1">Undecaprenyl-diphosphatase</fullName>
        <ecNumber evidence="1">3.6.1.27</ecNumber>
    </recommendedName>
    <alternativeName>
        <fullName evidence="1">Bacitracin resistance protein</fullName>
    </alternativeName>
    <alternativeName>
        <fullName evidence="1">Undecaprenyl pyrophosphate phosphatase</fullName>
    </alternativeName>
</protein>